<reference key="1">
    <citation type="journal article" date="2006" name="Proc. Natl. Acad. Sci. U.S.A.">
        <title>Multireplicon genome architecture of Lactobacillus salivarius.</title>
        <authorList>
            <person name="Claesson M.J."/>
            <person name="Li Y."/>
            <person name="Leahy S."/>
            <person name="Canchaya C."/>
            <person name="van Pijkeren J.P."/>
            <person name="Cerdeno-Tarraga A.M."/>
            <person name="Parkhill J."/>
            <person name="Flynn S."/>
            <person name="O'Sullivan G.C."/>
            <person name="Collins J.K."/>
            <person name="Higgins D."/>
            <person name="Shanahan F."/>
            <person name="Fitzgerald G.F."/>
            <person name="van Sinderen D."/>
            <person name="O'Toole P.W."/>
        </authorList>
    </citation>
    <scope>NUCLEOTIDE SEQUENCE [LARGE SCALE GENOMIC DNA]</scope>
    <source>
        <strain>UCC118</strain>
    </source>
</reference>
<organism>
    <name type="scientific">Ligilactobacillus salivarius (strain UCC118)</name>
    <name type="common">Lactobacillus salivarius</name>
    <dbReference type="NCBI Taxonomy" id="362948"/>
    <lineage>
        <taxon>Bacteria</taxon>
        <taxon>Bacillati</taxon>
        <taxon>Bacillota</taxon>
        <taxon>Bacilli</taxon>
        <taxon>Lactobacillales</taxon>
        <taxon>Lactobacillaceae</taxon>
        <taxon>Ligilactobacillus</taxon>
    </lineage>
</organism>
<proteinExistence type="inferred from homology"/>
<keyword id="KW-0227">DNA damage</keyword>
<keyword id="KW-0234">DNA repair</keyword>
<keyword id="KW-1185">Reference proteome</keyword>
<accession>Q1WT16</accession>
<evidence type="ECO:0000255" key="1">
    <source>
        <dbReference type="HAMAP-Rule" id="MF_00149"/>
    </source>
</evidence>
<name>MUTL_LIGS1</name>
<protein>
    <recommendedName>
        <fullName evidence="1">DNA mismatch repair protein MutL</fullName>
    </recommendedName>
</protein>
<gene>
    <name evidence="1" type="primary">mutL</name>
    <name type="ordered locus">LSL_1127</name>
</gene>
<sequence>MAKIHELSEILANQIAAGEVVERPASVVKELVENSIDAGAKQIDIIIEDAGLKSIQIIDDGNGIEAEDVETAFKRHATSKIIDRKDLFKVHTLGFRGEALPSIASVSDVVMETAVSGRAGTKIHIKGGEVLEKTLSASREGTTITVSDLFYNTPARLKYLKSVQTELSYISDIVNRLALSHTDVALSLTNNGRQLLQSAGNGNLQQTIGAIYGVQNARQMIKFEDANLDFKISGYTSLPKLTRASRNYISLLVNGRYVKNFQLTKAVIEGYGSKLMTGRYPITVLSIELDPTLVDVNVHPTKQEIKISKEDELVTFIQKTIFERIGQENLIPDGLQNIKSKTKEKLDFEQLKVGLNEASKQYQTKQHRTGITSEVTAALFGEKLTKDESQTQTNEKIKEETKVELSPIIIKDKQDLKSDRVKEWDEKYQSRNKETEVTSIAEKNGSVDDKRKDTPRFPTLRYIGQMHGTFLFAEGEEGLYIVDQHAAQERVKYEYYREEIGKVSPTQQNLLVPIVLTYPTTDALIIDENIDKLKELGIYLEDFGQNTYIIRQHPTWFKEGQEESIIREMIDYFLKDRKLSIAKFREKTAIMMSCKRSIKANHHLDDKQAKSILEQLKTCENPFNCPHGRPVLVKLSNKDLEHMFKRIQDPHHTGILEED</sequence>
<feature type="chain" id="PRO_1000010036" description="DNA mismatch repair protein MutL">
    <location>
        <begin position="1"/>
        <end position="659"/>
    </location>
</feature>
<comment type="function">
    <text evidence="1">This protein is involved in the repair of mismatches in DNA. It is required for dam-dependent methyl-directed DNA mismatch repair. May act as a 'molecular matchmaker', a protein that promotes the formation of a stable complex between two or more DNA-binding proteins in an ATP-dependent manner without itself being part of a final effector complex.</text>
</comment>
<comment type="similarity">
    <text evidence="1">Belongs to the DNA mismatch repair MutL/HexB family.</text>
</comment>
<dbReference type="EMBL" id="CP000233">
    <property type="protein sequence ID" value="ABD99935.1"/>
    <property type="molecule type" value="Genomic_DNA"/>
</dbReference>
<dbReference type="RefSeq" id="WP_011476177.1">
    <property type="nucleotide sequence ID" value="NC_007929.1"/>
</dbReference>
<dbReference type="RefSeq" id="YP_536018.1">
    <property type="nucleotide sequence ID" value="NC_007929.1"/>
</dbReference>
<dbReference type="SMR" id="Q1WT16"/>
<dbReference type="STRING" id="362948.LSL_1127"/>
<dbReference type="KEGG" id="lsl:LSL_1127"/>
<dbReference type="PATRIC" id="fig|362948.14.peg.1200"/>
<dbReference type="HOGENOM" id="CLU_004131_4_1_9"/>
<dbReference type="OrthoDB" id="9763467at2"/>
<dbReference type="Proteomes" id="UP000006559">
    <property type="component" value="Chromosome"/>
</dbReference>
<dbReference type="GO" id="GO:0032300">
    <property type="term" value="C:mismatch repair complex"/>
    <property type="evidence" value="ECO:0007669"/>
    <property type="project" value="InterPro"/>
</dbReference>
<dbReference type="GO" id="GO:0005524">
    <property type="term" value="F:ATP binding"/>
    <property type="evidence" value="ECO:0007669"/>
    <property type="project" value="InterPro"/>
</dbReference>
<dbReference type="GO" id="GO:0016887">
    <property type="term" value="F:ATP hydrolysis activity"/>
    <property type="evidence" value="ECO:0007669"/>
    <property type="project" value="InterPro"/>
</dbReference>
<dbReference type="GO" id="GO:0140664">
    <property type="term" value="F:ATP-dependent DNA damage sensor activity"/>
    <property type="evidence" value="ECO:0007669"/>
    <property type="project" value="InterPro"/>
</dbReference>
<dbReference type="GO" id="GO:0030983">
    <property type="term" value="F:mismatched DNA binding"/>
    <property type="evidence" value="ECO:0007669"/>
    <property type="project" value="InterPro"/>
</dbReference>
<dbReference type="GO" id="GO:0006298">
    <property type="term" value="P:mismatch repair"/>
    <property type="evidence" value="ECO:0007669"/>
    <property type="project" value="UniProtKB-UniRule"/>
</dbReference>
<dbReference type="CDD" id="cd16926">
    <property type="entry name" value="HATPase_MutL-MLH-PMS-like"/>
    <property type="match status" value="1"/>
</dbReference>
<dbReference type="CDD" id="cd00782">
    <property type="entry name" value="MutL_Trans"/>
    <property type="match status" value="1"/>
</dbReference>
<dbReference type="FunFam" id="3.30.1370.100:FF:000004">
    <property type="entry name" value="DNA mismatch repair endonuclease MutL"/>
    <property type="match status" value="1"/>
</dbReference>
<dbReference type="FunFam" id="3.30.565.10:FF:000003">
    <property type="entry name" value="DNA mismatch repair endonuclease MutL"/>
    <property type="match status" value="1"/>
</dbReference>
<dbReference type="Gene3D" id="3.30.230.10">
    <property type="match status" value="1"/>
</dbReference>
<dbReference type="Gene3D" id="3.30.565.10">
    <property type="entry name" value="Histidine kinase-like ATPase, C-terminal domain"/>
    <property type="match status" value="1"/>
</dbReference>
<dbReference type="Gene3D" id="3.30.1540.20">
    <property type="entry name" value="MutL, C-terminal domain, dimerisation subdomain"/>
    <property type="match status" value="1"/>
</dbReference>
<dbReference type="Gene3D" id="3.30.1370.100">
    <property type="entry name" value="MutL, C-terminal domain, regulatory subdomain"/>
    <property type="match status" value="1"/>
</dbReference>
<dbReference type="HAMAP" id="MF_00149">
    <property type="entry name" value="DNA_mis_repair"/>
    <property type="match status" value="1"/>
</dbReference>
<dbReference type="InterPro" id="IPR014762">
    <property type="entry name" value="DNA_mismatch_repair_CS"/>
</dbReference>
<dbReference type="InterPro" id="IPR020667">
    <property type="entry name" value="DNA_mismatch_repair_MutL"/>
</dbReference>
<dbReference type="InterPro" id="IPR013507">
    <property type="entry name" value="DNA_mismatch_S5_2-like"/>
</dbReference>
<dbReference type="InterPro" id="IPR036890">
    <property type="entry name" value="HATPase_C_sf"/>
</dbReference>
<dbReference type="InterPro" id="IPR002099">
    <property type="entry name" value="MutL/Mlh/PMS"/>
</dbReference>
<dbReference type="InterPro" id="IPR038973">
    <property type="entry name" value="MutL/Mlh/Pms-like"/>
</dbReference>
<dbReference type="InterPro" id="IPR014790">
    <property type="entry name" value="MutL_C"/>
</dbReference>
<dbReference type="InterPro" id="IPR042120">
    <property type="entry name" value="MutL_C_dimsub"/>
</dbReference>
<dbReference type="InterPro" id="IPR042121">
    <property type="entry name" value="MutL_C_regsub"/>
</dbReference>
<dbReference type="InterPro" id="IPR037198">
    <property type="entry name" value="MutL_C_sf"/>
</dbReference>
<dbReference type="InterPro" id="IPR020568">
    <property type="entry name" value="Ribosomal_Su5_D2-typ_SF"/>
</dbReference>
<dbReference type="InterPro" id="IPR014721">
    <property type="entry name" value="Ribsml_uS5_D2-typ_fold_subgr"/>
</dbReference>
<dbReference type="NCBIfam" id="TIGR00585">
    <property type="entry name" value="mutl"/>
    <property type="match status" value="1"/>
</dbReference>
<dbReference type="NCBIfam" id="NF000950">
    <property type="entry name" value="PRK00095.1-3"/>
    <property type="match status" value="1"/>
</dbReference>
<dbReference type="PANTHER" id="PTHR10073">
    <property type="entry name" value="DNA MISMATCH REPAIR PROTEIN MLH, PMS, MUTL"/>
    <property type="match status" value="1"/>
</dbReference>
<dbReference type="PANTHER" id="PTHR10073:SF12">
    <property type="entry name" value="DNA MISMATCH REPAIR PROTEIN MLH1"/>
    <property type="match status" value="1"/>
</dbReference>
<dbReference type="Pfam" id="PF01119">
    <property type="entry name" value="DNA_mis_repair"/>
    <property type="match status" value="1"/>
</dbReference>
<dbReference type="Pfam" id="PF13589">
    <property type="entry name" value="HATPase_c_3"/>
    <property type="match status" value="1"/>
</dbReference>
<dbReference type="Pfam" id="PF08676">
    <property type="entry name" value="MutL_C"/>
    <property type="match status" value="1"/>
</dbReference>
<dbReference type="SMART" id="SM01340">
    <property type="entry name" value="DNA_mis_repair"/>
    <property type="match status" value="1"/>
</dbReference>
<dbReference type="SMART" id="SM00853">
    <property type="entry name" value="MutL_C"/>
    <property type="match status" value="1"/>
</dbReference>
<dbReference type="SUPFAM" id="SSF55874">
    <property type="entry name" value="ATPase domain of HSP90 chaperone/DNA topoisomerase II/histidine kinase"/>
    <property type="match status" value="1"/>
</dbReference>
<dbReference type="SUPFAM" id="SSF118116">
    <property type="entry name" value="DNA mismatch repair protein MutL"/>
    <property type="match status" value="1"/>
</dbReference>
<dbReference type="SUPFAM" id="SSF54211">
    <property type="entry name" value="Ribosomal protein S5 domain 2-like"/>
    <property type="match status" value="1"/>
</dbReference>
<dbReference type="PROSITE" id="PS00058">
    <property type="entry name" value="DNA_MISMATCH_REPAIR_1"/>
    <property type="match status" value="1"/>
</dbReference>